<sequence length="272" mass="30428">MNNRVHQGHFARKRFGQNFLNDQFVIDSIVSAIHPVPGEAVVEIGPGLGALTEPVAARMDHMTVIELDRDLAARLASHPQLKDKLTIHQQDAMKVNFSELSEQAGQPLRVFGNLPYNISTPLMFHLFSYTDAIRDMHFMLQKEVVNRLVAGPNSKAYGRLTVMAQYYCNVIPVLEVPPTAFTPAPKVDSAVVRLIPHVQMPHPVGDVRMLSRITTQAFNQRRKTVRNSLGDLFTSEQLIELGIDPILRAENISVAQYCKLANWLSAQSTPQK</sequence>
<protein>
    <recommendedName>
        <fullName evidence="1">Ribosomal RNA small subunit methyltransferase A</fullName>
        <ecNumber evidence="1">2.1.1.182</ecNumber>
    </recommendedName>
    <alternativeName>
        <fullName evidence="1">16S rRNA (adenine(1518)-N(6)/adenine(1519)-N(6))-dimethyltransferase</fullName>
    </alternativeName>
    <alternativeName>
        <fullName evidence="1">16S rRNA dimethyladenosine transferase</fullName>
    </alternativeName>
    <alternativeName>
        <fullName evidence="1">16S rRNA dimethylase</fullName>
    </alternativeName>
    <alternativeName>
        <fullName evidence="1">S-adenosylmethionine-6-N', N'-adenosyl(rRNA) dimethyltransferase</fullName>
    </alternativeName>
</protein>
<reference key="1">
    <citation type="journal article" date="2004" name="Proc. Natl. Acad. Sci. U.S.A.">
        <title>Insights into the evolution of Yersinia pestis through whole-genome comparison with Yersinia pseudotuberculosis.</title>
        <authorList>
            <person name="Chain P.S.G."/>
            <person name="Carniel E."/>
            <person name="Larimer F.W."/>
            <person name="Lamerdin J."/>
            <person name="Stoutland P.O."/>
            <person name="Regala W.M."/>
            <person name="Georgescu A.M."/>
            <person name="Vergez L.M."/>
            <person name="Land M.L."/>
            <person name="Motin V.L."/>
            <person name="Brubaker R.R."/>
            <person name="Fowler J."/>
            <person name="Hinnebusch J."/>
            <person name="Marceau M."/>
            <person name="Medigue C."/>
            <person name="Simonet M."/>
            <person name="Chenal-Francisque V."/>
            <person name="Souza B."/>
            <person name="Dacheux D."/>
            <person name="Elliott J.M."/>
            <person name="Derbise A."/>
            <person name="Hauser L.J."/>
            <person name="Garcia E."/>
        </authorList>
    </citation>
    <scope>NUCLEOTIDE SEQUENCE [LARGE SCALE GENOMIC DNA]</scope>
    <source>
        <strain>IP32953</strain>
    </source>
</reference>
<keyword id="KW-0963">Cytoplasm</keyword>
<keyword id="KW-0489">Methyltransferase</keyword>
<keyword id="KW-0694">RNA-binding</keyword>
<keyword id="KW-0698">rRNA processing</keyword>
<keyword id="KW-0949">S-adenosyl-L-methionine</keyword>
<keyword id="KW-0808">Transferase</keyword>
<comment type="function">
    <text evidence="1">Specifically dimethylates two adjacent adenosines (A1518 and A1519) in the loop of a conserved hairpin near the 3'-end of 16S rRNA in the 30S particle. May play a critical role in biogenesis of 30S subunits.</text>
</comment>
<comment type="catalytic activity">
    <reaction evidence="1">
        <text>adenosine(1518)/adenosine(1519) in 16S rRNA + 4 S-adenosyl-L-methionine = N(6)-dimethyladenosine(1518)/N(6)-dimethyladenosine(1519) in 16S rRNA + 4 S-adenosyl-L-homocysteine + 4 H(+)</text>
        <dbReference type="Rhea" id="RHEA:19609"/>
        <dbReference type="Rhea" id="RHEA-COMP:10232"/>
        <dbReference type="Rhea" id="RHEA-COMP:10233"/>
        <dbReference type="ChEBI" id="CHEBI:15378"/>
        <dbReference type="ChEBI" id="CHEBI:57856"/>
        <dbReference type="ChEBI" id="CHEBI:59789"/>
        <dbReference type="ChEBI" id="CHEBI:74411"/>
        <dbReference type="ChEBI" id="CHEBI:74493"/>
        <dbReference type="EC" id="2.1.1.182"/>
    </reaction>
</comment>
<comment type="subcellular location">
    <subcellularLocation>
        <location evidence="1">Cytoplasm</location>
    </subcellularLocation>
</comment>
<comment type="similarity">
    <text evidence="1">Belongs to the class I-like SAM-binding methyltransferase superfamily. rRNA adenine N(6)-methyltransferase family. RsmA subfamily.</text>
</comment>
<proteinExistence type="inferred from homology"/>
<gene>
    <name evidence="1" type="primary">rsmA</name>
    <name evidence="1" type="synonym">ksgA</name>
    <name type="ordered locus">YPTB0633</name>
</gene>
<name>RSMA_YERPS</name>
<organism>
    <name type="scientific">Yersinia pseudotuberculosis serotype I (strain IP32953)</name>
    <dbReference type="NCBI Taxonomy" id="273123"/>
    <lineage>
        <taxon>Bacteria</taxon>
        <taxon>Pseudomonadati</taxon>
        <taxon>Pseudomonadota</taxon>
        <taxon>Gammaproteobacteria</taxon>
        <taxon>Enterobacterales</taxon>
        <taxon>Yersiniaceae</taxon>
        <taxon>Yersinia</taxon>
    </lineage>
</organism>
<feature type="chain" id="PRO_0000101649" description="Ribosomal RNA small subunit methyltransferase A">
    <location>
        <begin position="1"/>
        <end position="272"/>
    </location>
</feature>
<feature type="binding site" evidence="1">
    <location>
        <position position="18"/>
    </location>
    <ligand>
        <name>S-adenosyl-L-methionine</name>
        <dbReference type="ChEBI" id="CHEBI:59789"/>
    </ligand>
</feature>
<feature type="binding site" evidence="1">
    <location>
        <position position="20"/>
    </location>
    <ligand>
        <name>S-adenosyl-L-methionine</name>
        <dbReference type="ChEBI" id="CHEBI:59789"/>
    </ligand>
</feature>
<feature type="binding site" evidence="1">
    <location>
        <position position="45"/>
    </location>
    <ligand>
        <name>S-adenosyl-L-methionine</name>
        <dbReference type="ChEBI" id="CHEBI:59789"/>
    </ligand>
</feature>
<feature type="binding site" evidence="1">
    <location>
        <position position="66"/>
    </location>
    <ligand>
        <name>S-adenosyl-L-methionine</name>
        <dbReference type="ChEBI" id="CHEBI:59789"/>
    </ligand>
</feature>
<feature type="binding site" evidence="1">
    <location>
        <position position="91"/>
    </location>
    <ligand>
        <name>S-adenosyl-L-methionine</name>
        <dbReference type="ChEBI" id="CHEBI:59789"/>
    </ligand>
</feature>
<feature type="binding site" evidence="1">
    <location>
        <position position="113"/>
    </location>
    <ligand>
        <name>S-adenosyl-L-methionine</name>
        <dbReference type="ChEBI" id="CHEBI:59789"/>
    </ligand>
</feature>
<accession>Q66EQ8</accession>
<evidence type="ECO:0000255" key="1">
    <source>
        <dbReference type="HAMAP-Rule" id="MF_00607"/>
    </source>
</evidence>
<dbReference type="EC" id="2.1.1.182" evidence="1"/>
<dbReference type="EMBL" id="BX936398">
    <property type="protein sequence ID" value="CAH19873.1"/>
    <property type="molecule type" value="Genomic_DNA"/>
</dbReference>
<dbReference type="RefSeq" id="WP_011191710.1">
    <property type="nucleotide sequence ID" value="NC_006155.1"/>
</dbReference>
<dbReference type="SMR" id="Q66EQ8"/>
<dbReference type="GeneID" id="96664132"/>
<dbReference type="KEGG" id="ypo:BZ17_1924"/>
<dbReference type="KEGG" id="yps:YPTB0633"/>
<dbReference type="PATRIC" id="fig|273123.14.peg.2044"/>
<dbReference type="Proteomes" id="UP000001011">
    <property type="component" value="Chromosome"/>
</dbReference>
<dbReference type="GO" id="GO:0005829">
    <property type="term" value="C:cytosol"/>
    <property type="evidence" value="ECO:0007669"/>
    <property type="project" value="TreeGrafter"/>
</dbReference>
<dbReference type="GO" id="GO:0052908">
    <property type="term" value="F:16S rRNA (adenine(1518)-N(6)/adenine(1519)-N(6))-dimethyltransferase activity"/>
    <property type="evidence" value="ECO:0007669"/>
    <property type="project" value="UniProtKB-EC"/>
</dbReference>
<dbReference type="GO" id="GO:0003723">
    <property type="term" value="F:RNA binding"/>
    <property type="evidence" value="ECO:0007669"/>
    <property type="project" value="UniProtKB-KW"/>
</dbReference>
<dbReference type="CDD" id="cd02440">
    <property type="entry name" value="AdoMet_MTases"/>
    <property type="match status" value="1"/>
</dbReference>
<dbReference type="FunFam" id="1.10.8.100:FF:000001">
    <property type="entry name" value="Ribosomal RNA small subunit methyltransferase A"/>
    <property type="match status" value="1"/>
</dbReference>
<dbReference type="FunFam" id="3.40.50.150:FF:000006">
    <property type="entry name" value="Ribosomal RNA small subunit methyltransferase A"/>
    <property type="match status" value="1"/>
</dbReference>
<dbReference type="Gene3D" id="1.10.8.100">
    <property type="entry name" value="Ribosomal RNA adenine dimethylase-like, domain 2"/>
    <property type="match status" value="1"/>
</dbReference>
<dbReference type="Gene3D" id="3.40.50.150">
    <property type="entry name" value="Vaccinia Virus protein VP39"/>
    <property type="match status" value="1"/>
</dbReference>
<dbReference type="HAMAP" id="MF_00607">
    <property type="entry name" value="16SrRNA_methyltr_A"/>
    <property type="match status" value="1"/>
</dbReference>
<dbReference type="InterPro" id="IPR001737">
    <property type="entry name" value="KsgA/Erm"/>
</dbReference>
<dbReference type="InterPro" id="IPR023165">
    <property type="entry name" value="rRNA_Ade_diMease-like_C"/>
</dbReference>
<dbReference type="InterPro" id="IPR020596">
    <property type="entry name" value="rRNA_Ade_Mease_Trfase_CS"/>
</dbReference>
<dbReference type="InterPro" id="IPR020598">
    <property type="entry name" value="rRNA_Ade_methylase_Trfase_N"/>
</dbReference>
<dbReference type="InterPro" id="IPR011530">
    <property type="entry name" value="rRNA_adenine_dimethylase"/>
</dbReference>
<dbReference type="InterPro" id="IPR029063">
    <property type="entry name" value="SAM-dependent_MTases_sf"/>
</dbReference>
<dbReference type="NCBIfam" id="TIGR00755">
    <property type="entry name" value="ksgA"/>
    <property type="match status" value="1"/>
</dbReference>
<dbReference type="PANTHER" id="PTHR11727">
    <property type="entry name" value="DIMETHYLADENOSINE TRANSFERASE"/>
    <property type="match status" value="1"/>
</dbReference>
<dbReference type="PANTHER" id="PTHR11727:SF7">
    <property type="entry name" value="DIMETHYLADENOSINE TRANSFERASE-RELATED"/>
    <property type="match status" value="1"/>
</dbReference>
<dbReference type="Pfam" id="PF00398">
    <property type="entry name" value="RrnaAD"/>
    <property type="match status" value="1"/>
</dbReference>
<dbReference type="SMART" id="SM00650">
    <property type="entry name" value="rADc"/>
    <property type="match status" value="1"/>
</dbReference>
<dbReference type="SUPFAM" id="SSF53335">
    <property type="entry name" value="S-adenosyl-L-methionine-dependent methyltransferases"/>
    <property type="match status" value="1"/>
</dbReference>
<dbReference type="PROSITE" id="PS01131">
    <property type="entry name" value="RRNA_A_DIMETH"/>
    <property type="match status" value="1"/>
</dbReference>
<dbReference type="PROSITE" id="PS51689">
    <property type="entry name" value="SAM_RNA_A_N6_MT"/>
    <property type="match status" value="1"/>
</dbReference>